<organism>
    <name type="scientific">Serratia proteamaculans (strain 568)</name>
    <dbReference type="NCBI Taxonomy" id="399741"/>
    <lineage>
        <taxon>Bacteria</taxon>
        <taxon>Pseudomonadati</taxon>
        <taxon>Pseudomonadota</taxon>
        <taxon>Gammaproteobacteria</taxon>
        <taxon>Enterobacterales</taxon>
        <taxon>Yersiniaceae</taxon>
        <taxon>Serratia</taxon>
    </lineage>
</organism>
<proteinExistence type="inferred from homology"/>
<comment type="function">
    <text evidence="1">One of several proteins that assist in the late maturation steps of the functional core of the 30S ribosomal subunit. Helps release RbfA from mature subunits. May play a role in the assembly of ribosomal proteins into the subunit. Circularly permuted GTPase that catalyzes slow GTP hydrolysis, GTPase activity is stimulated by the 30S ribosomal subunit.</text>
</comment>
<comment type="cofactor">
    <cofactor evidence="1">
        <name>Zn(2+)</name>
        <dbReference type="ChEBI" id="CHEBI:29105"/>
    </cofactor>
    <text evidence="1">Binds 1 zinc ion per subunit.</text>
</comment>
<comment type="subunit">
    <text evidence="1">Monomer. Associates with 30S ribosomal subunit, binds 16S rRNA.</text>
</comment>
<comment type="subcellular location">
    <subcellularLocation>
        <location evidence="1">Cytoplasm</location>
    </subcellularLocation>
</comment>
<comment type="similarity">
    <text evidence="1">Belongs to the TRAFAC class YlqF/YawG GTPase family. RsgA subfamily.</text>
</comment>
<name>RSGA_SERP5</name>
<dbReference type="EC" id="3.6.1.-" evidence="1"/>
<dbReference type="EMBL" id="CP000826">
    <property type="protein sequence ID" value="ABV39531.1"/>
    <property type="molecule type" value="Genomic_DNA"/>
</dbReference>
<dbReference type="SMR" id="A8G8U1"/>
<dbReference type="STRING" id="399741.Spro_0423"/>
<dbReference type="KEGG" id="spe:Spro_0423"/>
<dbReference type="eggNOG" id="COG1162">
    <property type="taxonomic scope" value="Bacteria"/>
</dbReference>
<dbReference type="HOGENOM" id="CLU_033617_2_0_6"/>
<dbReference type="OrthoDB" id="9809485at2"/>
<dbReference type="GO" id="GO:0005737">
    <property type="term" value="C:cytoplasm"/>
    <property type="evidence" value="ECO:0007669"/>
    <property type="project" value="UniProtKB-SubCell"/>
</dbReference>
<dbReference type="GO" id="GO:0005525">
    <property type="term" value="F:GTP binding"/>
    <property type="evidence" value="ECO:0007669"/>
    <property type="project" value="UniProtKB-UniRule"/>
</dbReference>
<dbReference type="GO" id="GO:0003924">
    <property type="term" value="F:GTPase activity"/>
    <property type="evidence" value="ECO:0007669"/>
    <property type="project" value="UniProtKB-UniRule"/>
</dbReference>
<dbReference type="GO" id="GO:0046872">
    <property type="term" value="F:metal ion binding"/>
    <property type="evidence" value="ECO:0007669"/>
    <property type="project" value="UniProtKB-KW"/>
</dbReference>
<dbReference type="GO" id="GO:0019843">
    <property type="term" value="F:rRNA binding"/>
    <property type="evidence" value="ECO:0007669"/>
    <property type="project" value="UniProtKB-KW"/>
</dbReference>
<dbReference type="GO" id="GO:0042274">
    <property type="term" value="P:ribosomal small subunit biogenesis"/>
    <property type="evidence" value="ECO:0007669"/>
    <property type="project" value="UniProtKB-UniRule"/>
</dbReference>
<dbReference type="CDD" id="cd01854">
    <property type="entry name" value="YjeQ_EngC"/>
    <property type="match status" value="1"/>
</dbReference>
<dbReference type="Gene3D" id="2.40.50.140">
    <property type="entry name" value="Nucleic acid-binding proteins"/>
    <property type="match status" value="1"/>
</dbReference>
<dbReference type="Gene3D" id="3.40.50.300">
    <property type="entry name" value="P-loop containing nucleotide triphosphate hydrolases"/>
    <property type="match status" value="1"/>
</dbReference>
<dbReference type="Gene3D" id="1.10.40.50">
    <property type="entry name" value="Probable gtpase engc, domain 3"/>
    <property type="match status" value="1"/>
</dbReference>
<dbReference type="HAMAP" id="MF_01820">
    <property type="entry name" value="GTPase_RsgA"/>
    <property type="match status" value="1"/>
</dbReference>
<dbReference type="InterPro" id="IPR030378">
    <property type="entry name" value="G_CP_dom"/>
</dbReference>
<dbReference type="InterPro" id="IPR012340">
    <property type="entry name" value="NA-bd_OB-fold"/>
</dbReference>
<dbReference type="InterPro" id="IPR027417">
    <property type="entry name" value="P-loop_NTPase"/>
</dbReference>
<dbReference type="InterPro" id="IPR004881">
    <property type="entry name" value="Ribosome_biogen_GTPase_RsgA"/>
</dbReference>
<dbReference type="InterPro" id="IPR010914">
    <property type="entry name" value="RsgA_GTPase_dom"/>
</dbReference>
<dbReference type="NCBIfam" id="NF008931">
    <property type="entry name" value="PRK12288.1"/>
    <property type="match status" value="1"/>
</dbReference>
<dbReference type="NCBIfam" id="TIGR00157">
    <property type="entry name" value="ribosome small subunit-dependent GTPase A"/>
    <property type="match status" value="1"/>
</dbReference>
<dbReference type="PANTHER" id="PTHR32120">
    <property type="entry name" value="SMALL RIBOSOMAL SUBUNIT BIOGENESIS GTPASE RSGA"/>
    <property type="match status" value="1"/>
</dbReference>
<dbReference type="PANTHER" id="PTHR32120:SF11">
    <property type="entry name" value="SMALL RIBOSOMAL SUBUNIT BIOGENESIS GTPASE RSGA 1, MITOCHONDRIAL-RELATED"/>
    <property type="match status" value="1"/>
</dbReference>
<dbReference type="Pfam" id="PF03193">
    <property type="entry name" value="RsgA_GTPase"/>
    <property type="match status" value="1"/>
</dbReference>
<dbReference type="SUPFAM" id="SSF52540">
    <property type="entry name" value="P-loop containing nucleoside triphosphate hydrolases"/>
    <property type="match status" value="1"/>
</dbReference>
<dbReference type="PROSITE" id="PS50936">
    <property type="entry name" value="ENGC_GTPASE"/>
    <property type="match status" value="1"/>
</dbReference>
<dbReference type="PROSITE" id="PS51721">
    <property type="entry name" value="G_CP"/>
    <property type="match status" value="1"/>
</dbReference>
<reference key="1">
    <citation type="submission" date="2007-09" db="EMBL/GenBank/DDBJ databases">
        <title>Complete sequence of chromosome of Serratia proteamaculans 568.</title>
        <authorList>
            <consortium name="US DOE Joint Genome Institute"/>
            <person name="Copeland A."/>
            <person name="Lucas S."/>
            <person name="Lapidus A."/>
            <person name="Barry K."/>
            <person name="Glavina del Rio T."/>
            <person name="Dalin E."/>
            <person name="Tice H."/>
            <person name="Pitluck S."/>
            <person name="Chain P."/>
            <person name="Malfatti S."/>
            <person name="Shin M."/>
            <person name="Vergez L."/>
            <person name="Schmutz J."/>
            <person name="Larimer F."/>
            <person name="Land M."/>
            <person name="Hauser L."/>
            <person name="Kyrpides N."/>
            <person name="Kim E."/>
            <person name="Taghavi S."/>
            <person name="Newman L."/>
            <person name="Vangronsveld J."/>
            <person name="van der Lelie D."/>
            <person name="Richardson P."/>
        </authorList>
    </citation>
    <scope>NUCLEOTIDE SEQUENCE [LARGE SCALE GENOMIC DNA]</scope>
    <source>
        <strain>568</strain>
    </source>
</reference>
<keyword id="KW-0963">Cytoplasm</keyword>
<keyword id="KW-0342">GTP-binding</keyword>
<keyword id="KW-0378">Hydrolase</keyword>
<keyword id="KW-0479">Metal-binding</keyword>
<keyword id="KW-0547">Nucleotide-binding</keyword>
<keyword id="KW-0690">Ribosome biogenesis</keyword>
<keyword id="KW-0694">RNA-binding</keyword>
<keyword id="KW-0699">rRNA-binding</keyword>
<keyword id="KW-0862">Zinc</keyword>
<accession>A8G8U1</accession>
<evidence type="ECO:0000255" key="1">
    <source>
        <dbReference type="HAMAP-Rule" id="MF_01820"/>
    </source>
</evidence>
<evidence type="ECO:0000255" key="2">
    <source>
        <dbReference type="PROSITE-ProRule" id="PRU01058"/>
    </source>
</evidence>
<evidence type="ECO:0000256" key="3">
    <source>
        <dbReference type="SAM" id="MobiDB-lite"/>
    </source>
</evidence>
<feature type="chain" id="PRO_1000188139" description="Small ribosomal subunit biogenesis GTPase RsgA">
    <location>
        <begin position="1"/>
        <end position="349"/>
    </location>
</feature>
<feature type="domain" description="CP-type G" evidence="2">
    <location>
        <begin position="102"/>
        <end position="272"/>
    </location>
</feature>
<feature type="region of interest" description="Disordered" evidence="3">
    <location>
        <begin position="1"/>
        <end position="38"/>
    </location>
</feature>
<feature type="binding site" evidence="1">
    <location>
        <begin position="158"/>
        <end position="161"/>
    </location>
    <ligand>
        <name>GTP</name>
        <dbReference type="ChEBI" id="CHEBI:37565"/>
    </ligand>
</feature>
<feature type="binding site" evidence="1">
    <location>
        <begin position="212"/>
        <end position="220"/>
    </location>
    <ligand>
        <name>GTP</name>
        <dbReference type="ChEBI" id="CHEBI:37565"/>
    </ligand>
</feature>
<feature type="binding site" evidence="1">
    <location>
        <position position="296"/>
    </location>
    <ligand>
        <name>Zn(2+)</name>
        <dbReference type="ChEBI" id="CHEBI:29105"/>
    </ligand>
</feature>
<feature type="binding site" evidence="1">
    <location>
        <position position="301"/>
    </location>
    <ligand>
        <name>Zn(2+)</name>
        <dbReference type="ChEBI" id="CHEBI:29105"/>
    </ligand>
</feature>
<feature type="binding site" evidence="1">
    <location>
        <position position="303"/>
    </location>
    <ligand>
        <name>Zn(2+)</name>
        <dbReference type="ChEBI" id="CHEBI:29105"/>
    </ligand>
</feature>
<feature type="binding site" evidence="1">
    <location>
        <position position="309"/>
    </location>
    <ligand>
        <name>Zn(2+)</name>
        <dbReference type="ChEBI" id="CHEBI:29105"/>
    </ligand>
</feature>
<sequence length="349" mass="38864">MSKNKLSKGQERRVQANHQRRLKRTDNKPELDDSQLGEPQDGIVISRFGMHADVEAADGTQHRCNIRRTLRSLVTGDRVVWRPGVGTHAGVKGIVEAVHERTSVLNRPDIYDGVKPIAANIDQIVIVSAILPELSLNMIDRYLVACETLEVEPLIVLNKIDLLDAEARKTVDGMMDIYRHIGYRVLEVSSQTREGMEAFEQALADRISIFAGQSGVGKSSLLNALLPPSDKQILVNQVSDVSGLGQHTTTAARLYHFQHGGDVIDSPGVREFGLWHLEPEQVTQAYVEFRDYLGGCKFRDCRHDTDPGCAIRGAMEKGDIAKERFENYHRILESMASVKVRKNFTDAAG</sequence>
<protein>
    <recommendedName>
        <fullName evidence="1">Small ribosomal subunit biogenesis GTPase RsgA</fullName>
        <ecNumber evidence="1">3.6.1.-</ecNumber>
    </recommendedName>
</protein>
<gene>
    <name evidence="1" type="primary">rsgA</name>
    <name type="ordered locus">Spro_0423</name>
</gene>